<feature type="chain" id="PRO_1000088314" description="Beta-ketoacyl-[acyl-carrier-protein] synthase III">
    <location>
        <begin position="1"/>
        <end position="321"/>
    </location>
</feature>
<feature type="region of interest" description="ACP-binding" evidence="1">
    <location>
        <begin position="249"/>
        <end position="253"/>
    </location>
</feature>
<feature type="active site" evidence="1">
    <location>
        <position position="114"/>
    </location>
</feature>
<feature type="active site" evidence="1">
    <location>
        <position position="248"/>
    </location>
</feature>
<feature type="active site" evidence="1">
    <location>
        <position position="278"/>
    </location>
</feature>
<keyword id="KW-0012">Acyltransferase</keyword>
<keyword id="KW-0963">Cytoplasm</keyword>
<keyword id="KW-0275">Fatty acid biosynthesis</keyword>
<keyword id="KW-0276">Fatty acid metabolism</keyword>
<keyword id="KW-0444">Lipid biosynthesis</keyword>
<keyword id="KW-0443">Lipid metabolism</keyword>
<keyword id="KW-0511">Multifunctional enzyme</keyword>
<keyword id="KW-1185">Reference proteome</keyword>
<keyword id="KW-0808">Transferase</keyword>
<dbReference type="EC" id="2.3.1.180" evidence="1"/>
<dbReference type="EMBL" id="AE017282">
    <property type="protein sequence ID" value="AAU91776.1"/>
    <property type="molecule type" value="Genomic_DNA"/>
</dbReference>
<dbReference type="RefSeq" id="WP_010961248.1">
    <property type="nucleotide sequence ID" value="NC_002977.6"/>
</dbReference>
<dbReference type="SMR" id="Q606L3"/>
<dbReference type="STRING" id="243233.MCA2003"/>
<dbReference type="GeneID" id="88224231"/>
<dbReference type="KEGG" id="mca:MCA2003"/>
<dbReference type="eggNOG" id="COG0332">
    <property type="taxonomic scope" value="Bacteria"/>
</dbReference>
<dbReference type="HOGENOM" id="CLU_039592_3_1_6"/>
<dbReference type="UniPathway" id="UPA00094"/>
<dbReference type="Proteomes" id="UP000006821">
    <property type="component" value="Chromosome"/>
</dbReference>
<dbReference type="GO" id="GO:0005737">
    <property type="term" value="C:cytoplasm"/>
    <property type="evidence" value="ECO:0007669"/>
    <property type="project" value="UniProtKB-SubCell"/>
</dbReference>
<dbReference type="GO" id="GO:0004315">
    <property type="term" value="F:3-oxoacyl-[acyl-carrier-protein] synthase activity"/>
    <property type="evidence" value="ECO:0007669"/>
    <property type="project" value="InterPro"/>
</dbReference>
<dbReference type="GO" id="GO:0033818">
    <property type="term" value="F:beta-ketoacyl-acyl-carrier-protein synthase III activity"/>
    <property type="evidence" value="ECO:0007669"/>
    <property type="project" value="UniProtKB-UniRule"/>
</dbReference>
<dbReference type="GO" id="GO:0006633">
    <property type="term" value="P:fatty acid biosynthetic process"/>
    <property type="evidence" value="ECO:0007669"/>
    <property type="project" value="UniProtKB-UniRule"/>
</dbReference>
<dbReference type="CDD" id="cd00830">
    <property type="entry name" value="KAS_III"/>
    <property type="match status" value="1"/>
</dbReference>
<dbReference type="FunFam" id="3.40.47.10:FF:000004">
    <property type="entry name" value="3-oxoacyl-[acyl-carrier-protein] synthase 3"/>
    <property type="match status" value="1"/>
</dbReference>
<dbReference type="Gene3D" id="3.40.47.10">
    <property type="match status" value="1"/>
</dbReference>
<dbReference type="HAMAP" id="MF_01815">
    <property type="entry name" value="FabH"/>
    <property type="match status" value="1"/>
</dbReference>
<dbReference type="InterPro" id="IPR013747">
    <property type="entry name" value="ACP_syn_III_C"/>
</dbReference>
<dbReference type="InterPro" id="IPR013751">
    <property type="entry name" value="ACP_syn_III_N"/>
</dbReference>
<dbReference type="InterPro" id="IPR004655">
    <property type="entry name" value="FabH"/>
</dbReference>
<dbReference type="InterPro" id="IPR016039">
    <property type="entry name" value="Thiolase-like"/>
</dbReference>
<dbReference type="NCBIfam" id="TIGR00747">
    <property type="entry name" value="fabH"/>
    <property type="match status" value="1"/>
</dbReference>
<dbReference type="NCBIfam" id="NF006829">
    <property type="entry name" value="PRK09352.1"/>
    <property type="match status" value="1"/>
</dbReference>
<dbReference type="PANTHER" id="PTHR43091">
    <property type="entry name" value="3-OXOACYL-[ACYL-CARRIER-PROTEIN] SYNTHASE"/>
    <property type="match status" value="1"/>
</dbReference>
<dbReference type="PANTHER" id="PTHR43091:SF1">
    <property type="entry name" value="BETA-KETOACYL-[ACYL-CARRIER-PROTEIN] SYNTHASE III, CHLOROPLASTIC"/>
    <property type="match status" value="1"/>
</dbReference>
<dbReference type="Pfam" id="PF08545">
    <property type="entry name" value="ACP_syn_III"/>
    <property type="match status" value="1"/>
</dbReference>
<dbReference type="Pfam" id="PF08541">
    <property type="entry name" value="ACP_syn_III_C"/>
    <property type="match status" value="1"/>
</dbReference>
<dbReference type="SUPFAM" id="SSF53901">
    <property type="entry name" value="Thiolase-like"/>
    <property type="match status" value="1"/>
</dbReference>
<accession>Q606L3</accession>
<gene>
    <name evidence="1" type="primary">fabH</name>
    <name type="ordered locus">MCA2003</name>
</gene>
<reference key="1">
    <citation type="journal article" date="2004" name="PLoS Biol.">
        <title>Genomic insights into methanotrophy: the complete genome sequence of Methylococcus capsulatus (Bath).</title>
        <authorList>
            <person name="Ward N.L."/>
            <person name="Larsen O."/>
            <person name="Sakwa J."/>
            <person name="Bruseth L."/>
            <person name="Khouri H.M."/>
            <person name="Durkin A.S."/>
            <person name="Dimitrov G."/>
            <person name="Jiang L."/>
            <person name="Scanlan D."/>
            <person name="Kang K.H."/>
            <person name="Lewis M.R."/>
            <person name="Nelson K.E."/>
            <person name="Methe B.A."/>
            <person name="Wu M."/>
            <person name="Heidelberg J.F."/>
            <person name="Paulsen I.T."/>
            <person name="Fouts D.E."/>
            <person name="Ravel J."/>
            <person name="Tettelin H."/>
            <person name="Ren Q."/>
            <person name="Read T.D."/>
            <person name="DeBoy R.T."/>
            <person name="Seshadri R."/>
            <person name="Salzberg S.L."/>
            <person name="Jensen H.B."/>
            <person name="Birkeland N.K."/>
            <person name="Nelson W.C."/>
            <person name="Dodson R.J."/>
            <person name="Grindhaug S.H."/>
            <person name="Holt I.E."/>
            <person name="Eidhammer I."/>
            <person name="Jonasen I."/>
            <person name="Vanaken S."/>
            <person name="Utterback T.R."/>
            <person name="Feldblyum T.V."/>
            <person name="Fraser C.M."/>
            <person name="Lillehaug J.R."/>
            <person name="Eisen J.A."/>
        </authorList>
    </citation>
    <scope>NUCLEOTIDE SEQUENCE [LARGE SCALE GENOMIC DNA]</scope>
    <source>
        <strain>ATCC 33009 / NCIMB 11132 / Bath</strain>
    </source>
</reference>
<sequence length="321" mass="34697">MSRYSRIAGTGGYLPRQVVTNDDLAMRVETSDEWIVERTGIRRRHIAAADETASSMAEIASRQALEAAAIDPHDLDLIILATSSPDRVFPSTACLLQQRLGVRSCAAFDVQAACSGFIFALSIADQYISAGNANRVLVVGTEVNSRSVDWDDRSTCILFGDGAGAVVLESATEPGIMSTHIHSDGHYQDLLYLPNPASNGEGSDESRTIRMQGSEVFKVAVNTLGRIVDETLEQNGLQKSDVDWLVPHQANIRIIAATAKKLQLPMERVVVTVDEQGNTSSASIPLAFDEAVRDGRIKRGQTVLMEAFGGGFAWGSALLRY</sequence>
<comment type="function">
    <text evidence="1">Catalyzes the condensation reaction of fatty acid synthesis by the addition to an acyl acceptor of two carbons from malonyl-ACP. Catalyzes the first condensation reaction which initiates fatty acid synthesis and may therefore play a role in governing the total rate of fatty acid production. Possesses both acetoacetyl-ACP synthase and acetyl transacylase activities. Its substrate specificity determines the biosynthesis of branched-chain and/or straight-chain of fatty acids.</text>
</comment>
<comment type="catalytic activity">
    <reaction evidence="1">
        <text>malonyl-[ACP] + acetyl-CoA + H(+) = 3-oxobutanoyl-[ACP] + CO2 + CoA</text>
        <dbReference type="Rhea" id="RHEA:12080"/>
        <dbReference type="Rhea" id="RHEA-COMP:9623"/>
        <dbReference type="Rhea" id="RHEA-COMP:9625"/>
        <dbReference type="ChEBI" id="CHEBI:15378"/>
        <dbReference type="ChEBI" id="CHEBI:16526"/>
        <dbReference type="ChEBI" id="CHEBI:57287"/>
        <dbReference type="ChEBI" id="CHEBI:57288"/>
        <dbReference type="ChEBI" id="CHEBI:78449"/>
        <dbReference type="ChEBI" id="CHEBI:78450"/>
        <dbReference type="EC" id="2.3.1.180"/>
    </reaction>
</comment>
<comment type="pathway">
    <text evidence="1">Lipid metabolism; fatty acid biosynthesis.</text>
</comment>
<comment type="subunit">
    <text evidence="1">Homodimer.</text>
</comment>
<comment type="subcellular location">
    <subcellularLocation>
        <location evidence="1">Cytoplasm</location>
    </subcellularLocation>
</comment>
<comment type="domain">
    <text evidence="1">The last Arg residue of the ACP-binding site is essential for the weak association between ACP/AcpP and FabH.</text>
</comment>
<comment type="similarity">
    <text evidence="1">Belongs to the thiolase-like superfamily. FabH family.</text>
</comment>
<proteinExistence type="inferred from homology"/>
<organism>
    <name type="scientific">Methylococcus capsulatus (strain ATCC 33009 / NCIMB 11132 / Bath)</name>
    <dbReference type="NCBI Taxonomy" id="243233"/>
    <lineage>
        <taxon>Bacteria</taxon>
        <taxon>Pseudomonadati</taxon>
        <taxon>Pseudomonadota</taxon>
        <taxon>Gammaproteobacteria</taxon>
        <taxon>Methylococcales</taxon>
        <taxon>Methylococcaceae</taxon>
        <taxon>Methylococcus</taxon>
    </lineage>
</organism>
<evidence type="ECO:0000255" key="1">
    <source>
        <dbReference type="HAMAP-Rule" id="MF_01815"/>
    </source>
</evidence>
<name>FABH_METCA</name>
<protein>
    <recommendedName>
        <fullName evidence="1">Beta-ketoacyl-[acyl-carrier-protein] synthase III</fullName>
        <shortName evidence="1">Beta-ketoacyl-ACP synthase III</shortName>
        <shortName evidence="1">KAS III</shortName>
        <ecNumber evidence="1">2.3.1.180</ecNumber>
    </recommendedName>
    <alternativeName>
        <fullName evidence="1">3-oxoacyl-[acyl-carrier-protein] synthase 3</fullName>
    </alternativeName>
    <alternativeName>
        <fullName evidence="1">3-oxoacyl-[acyl-carrier-protein] synthase III</fullName>
    </alternativeName>
</protein>